<feature type="chain" id="PRO_0000133124" description="Replication protein E1">
    <location>
        <begin position="1"/>
        <end position="638"/>
    </location>
</feature>
<feature type="domain" description="SF3 helicase" evidence="1">
    <location>
        <begin position="441"/>
        <end position="591"/>
    </location>
</feature>
<feature type="region of interest" description="Disordered" evidence="2">
    <location>
        <begin position="90"/>
        <end position="133"/>
    </location>
</feature>
<feature type="region of interest" description="DNA-binding region" evidence="1">
    <location>
        <begin position="176"/>
        <end position="342"/>
    </location>
</feature>
<feature type="short sequence motif" description="Nuclear localization signal" evidence="1">
    <location>
        <begin position="84"/>
        <end position="86"/>
    </location>
</feature>
<feature type="compositionally biased region" description="Polar residues" evidence="2">
    <location>
        <begin position="90"/>
        <end position="119"/>
    </location>
</feature>
<feature type="binding site" evidence="1">
    <location>
        <begin position="467"/>
        <end position="474"/>
    </location>
    <ligand>
        <name>ATP</name>
        <dbReference type="ChEBI" id="CHEBI:30616"/>
    </ligand>
</feature>
<feature type="modified residue" description="Phosphoserine; by host" evidence="1">
    <location>
        <position position="90"/>
    </location>
</feature>
<organismHost>
    <name type="scientific">Homo sapiens</name>
    <name type="common">Human</name>
    <dbReference type="NCBI Taxonomy" id="9606"/>
</organismHost>
<keyword id="KW-0067">ATP-binding</keyword>
<keyword id="KW-0235">DNA replication</keyword>
<keyword id="KW-0238">DNA-binding</keyword>
<keyword id="KW-0244">Early protein</keyword>
<keyword id="KW-0347">Helicase</keyword>
<keyword id="KW-1048">Host nucleus</keyword>
<keyword id="KW-0378">Hydrolase</keyword>
<keyword id="KW-0413">Isomerase</keyword>
<keyword id="KW-0547">Nucleotide-binding</keyword>
<keyword id="KW-0597">Phosphoprotein</keyword>
<keyword id="KW-1185">Reference proteome</keyword>
<dbReference type="EC" id="5.6.2.4" evidence="1"/>
<dbReference type="EMBL" id="X74472">
    <property type="protein sequence ID" value="CAA52532.1"/>
    <property type="molecule type" value="Genomic_DNA"/>
</dbReference>
<dbReference type="PIR" id="S36546">
    <property type="entry name" value="S36546"/>
</dbReference>
<dbReference type="RefSeq" id="NP_041784.1">
    <property type="nucleotide sequence ID" value="NC_001583.1"/>
</dbReference>
<dbReference type="SMR" id="P36722"/>
<dbReference type="GeneID" id="1496944"/>
<dbReference type="KEGG" id="vg:1496944"/>
<dbReference type="OrthoDB" id="4795at10239"/>
<dbReference type="Proteomes" id="UP000009113">
    <property type="component" value="Genome"/>
</dbReference>
<dbReference type="GO" id="GO:0042025">
    <property type="term" value="C:host cell nucleus"/>
    <property type="evidence" value="ECO:0007669"/>
    <property type="project" value="UniProtKB-SubCell"/>
</dbReference>
<dbReference type="GO" id="GO:0005524">
    <property type="term" value="F:ATP binding"/>
    <property type="evidence" value="ECO:0007669"/>
    <property type="project" value="UniProtKB-UniRule"/>
</dbReference>
<dbReference type="GO" id="GO:0016887">
    <property type="term" value="F:ATP hydrolysis activity"/>
    <property type="evidence" value="ECO:0007669"/>
    <property type="project" value="RHEA"/>
</dbReference>
<dbReference type="GO" id="GO:0003677">
    <property type="term" value="F:DNA binding"/>
    <property type="evidence" value="ECO:0007669"/>
    <property type="project" value="UniProtKB-UniRule"/>
</dbReference>
<dbReference type="GO" id="GO:0003678">
    <property type="term" value="F:DNA helicase activity"/>
    <property type="evidence" value="ECO:0007669"/>
    <property type="project" value="UniProtKB-UniRule"/>
</dbReference>
<dbReference type="GO" id="GO:0006260">
    <property type="term" value="P:DNA replication"/>
    <property type="evidence" value="ECO:0007669"/>
    <property type="project" value="UniProtKB-UniRule"/>
</dbReference>
<dbReference type="Gene3D" id="3.40.1310.10">
    <property type="match status" value="1"/>
</dbReference>
<dbReference type="Gene3D" id="3.40.50.300">
    <property type="entry name" value="P-loop containing nucleotide triphosphate hydrolases"/>
    <property type="match status" value="1"/>
</dbReference>
<dbReference type="Gene3D" id="1.10.10.510">
    <property type="entry name" value="Zinc finger, large T-antigen D1 domain"/>
    <property type="match status" value="1"/>
</dbReference>
<dbReference type="HAMAP" id="MF_04000">
    <property type="entry name" value="PPV_E1"/>
    <property type="match status" value="1"/>
</dbReference>
<dbReference type="InterPro" id="IPR014015">
    <property type="entry name" value="Helicase_SF3_DNA-vir"/>
</dbReference>
<dbReference type="InterPro" id="IPR027417">
    <property type="entry name" value="P-loop_NTPase"/>
</dbReference>
<dbReference type="InterPro" id="IPR001177">
    <property type="entry name" value="PPV_DNA_helicase_E1_C"/>
</dbReference>
<dbReference type="InterPro" id="IPR014000">
    <property type="entry name" value="PPV_DNA_helicase_E1_N"/>
</dbReference>
<dbReference type="InterPro" id="IPR046832">
    <property type="entry name" value="PPV_E1_DBD"/>
</dbReference>
<dbReference type="InterPro" id="IPR046935">
    <property type="entry name" value="PPV_E1_DBD_sf"/>
</dbReference>
<dbReference type="InterPro" id="IPR016393">
    <property type="entry name" value="Rep_E1_papillomaV"/>
</dbReference>
<dbReference type="InterPro" id="IPR037102">
    <property type="entry name" value="Znf_lg_T-Ag_D1_dom_sf"/>
</dbReference>
<dbReference type="Pfam" id="PF00519">
    <property type="entry name" value="PPV_E1_C"/>
    <property type="match status" value="1"/>
</dbReference>
<dbReference type="Pfam" id="PF20450">
    <property type="entry name" value="PPV_E1_DBD"/>
    <property type="match status" value="1"/>
</dbReference>
<dbReference type="Pfam" id="PF00524">
    <property type="entry name" value="PPV_E1_N"/>
    <property type="match status" value="1"/>
</dbReference>
<dbReference type="PIRSF" id="PIRSF003383">
    <property type="entry name" value="Rep_E1_papillomaV"/>
    <property type="match status" value="1"/>
</dbReference>
<dbReference type="SUPFAM" id="SSF55464">
    <property type="entry name" value="Origin of replication-binding domain, RBD-like"/>
    <property type="match status" value="1"/>
</dbReference>
<dbReference type="SUPFAM" id="SSF52540">
    <property type="entry name" value="P-loop containing nucleoside triphosphate hydrolases"/>
    <property type="match status" value="1"/>
</dbReference>
<dbReference type="PROSITE" id="PS51206">
    <property type="entry name" value="SF3_HELICASE_1"/>
    <property type="match status" value="1"/>
</dbReference>
<sequence>MDCEGTNEEGRGCTGWFSVEAIVEKHTGDTISDDETDNSSDTGSDLIGFIDDSSISDYAEQEVTQALFQAQQKQANTKAVRNLKRKLLGSQNSPLQDITNQHRQQSDSQQNTHQVNNSQAKRRAVDSVPDSGYGYTEVETLTPVQVDKQYEENGGLPSVCSQGGSNASVEDIDVDTHVNSVTQICELLKCSNVKAALLSKFKTVYGVSFAELVRVFKSDKTCCSDWVCAAFGVAGSVAESIKSLIQQYCLYYHIQCLTCNWGVIVLMLVRFTCAKNRTTIKNCLCMLLNVPETQLLIEPPKLRSTAVALYFYKTGLSNISETYGDTPEWIVRQTQLEHSFDDATFDLSKMVQWAFDHDITDDSEIAFKYAQLADIDSNAAAFLKSNCQAKYVKDCATMTRHYKRAQKRSMCMSQWLQYRCSKIEEGGSWKEIAKFLRFQHVNFIYFLQVLKQFLKGTPKHNCIVIYGPPNTGKSQFAMSFIKFMQGSVISYVNSNSHFWLQPLEDAKVAVLDDATYSCWLYIDKYLRNFLDGNPCCIDRKHRSLLQVTCPPLIITSNINPQEDNSLLYLHSRVTVIPFPNTFPFDSNGNPVYALTDVNWKSFFSTTWSRLDLEEDADKENGEPLPAFKCVPGENTRLL</sequence>
<proteinExistence type="inferred from homology"/>
<gene>
    <name evidence="1" type="primary">E1</name>
</gene>
<reference key="1">
    <citation type="journal article" date="1994" name="Curr. Top. Microbiol. Immunol.">
        <title>Primer-directed sequencing of human papillomavirus types.</title>
        <authorList>
            <person name="Delius H."/>
            <person name="Hofmann B."/>
        </authorList>
    </citation>
    <scope>NUCLEOTIDE SEQUENCE [GENOMIC DNA]</scope>
</reference>
<organism>
    <name type="scientific">Human papillomavirus type 26</name>
    <dbReference type="NCBI Taxonomy" id="333762"/>
    <lineage>
        <taxon>Viruses</taxon>
        <taxon>Monodnaviria</taxon>
        <taxon>Shotokuvirae</taxon>
        <taxon>Cossaviricota</taxon>
        <taxon>Papovaviricetes</taxon>
        <taxon>Zurhausenvirales</taxon>
        <taxon>Papillomaviridae</taxon>
        <taxon>Firstpapillomavirinae</taxon>
        <taxon>Alphapapillomavirus</taxon>
        <taxon>Alphapapillomavirus 5</taxon>
    </lineage>
</organism>
<comment type="function">
    <text evidence="1">ATP-dependent DNA 3'-5' helicase required for initiation of viral DNA replication. It forms a complex with the viral E2 protein. The E1-E2 complex binds to the replication origin which contains binding sites for both proteins. During the initial step, a dimer of E1 interacts with a dimer of protein E2 leading to a complex that binds the viral origin of replication with high specificity. Then, a second dimer of E1 displaces the E2 dimer in an ATP-dependent manner to form the E1 tetramer. Following this, two E1 monomers are added to each half of the site, which results in the formation of two E1 trimers on the viral ori. Subsequently, two hexamers will be created. The double hexamer acts as a bi-directional helicase machinery and unwinds the viral DNA and then recruits the host DNA polymerase to start replication.</text>
</comment>
<comment type="catalytic activity">
    <reaction evidence="1">
        <text>Couples ATP hydrolysis with the unwinding of duplex DNA by translocating in the 3'-5' direction.</text>
        <dbReference type="EC" id="5.6.2.4"/>
    </reaction>
</comment>
<comment type="catalytic activity">
    <reaction evidence="1">
        <text>ATP + H2O = ADP + phosphate + H(+)</text>
        <dbReference type="Rhea" id="RHEA:13065"/>
        <dbReference type="ChEBI" id="CHEBI:15377"/>
        <dbReference type="ChEBI" id="CHEBI:15378"/>
        <dbReference type="ChEBI" id="CHEBI:30616"/>
        <dbReference type="ChEBI" id="CHEBI:43474"/>
        <dbReference type="ChEBI" id="CHEBI:456216"/>
        <dbReference type="EC" id="5.6.2.4"/>
    </reaction>
</comment>
<comment type="subunit">
    <text evidence="1">Can form hexamers. Interacts with E2 protein; this interaction increases E1 DNA binding specificity. Interacts with host DNA polymerase subunit POLA2. Interacts with host single stranded DNA-binding protein RPA1. Interacts with host TOP1; this interaction stimulates the enzymatic activity of TOP1.</text>
</comment>
<comment type="subcellular location">
    <subcellularLocation>
        <location evidence="1">Host nucleus</location>
    </subcellularLocation>
</comment>
<comment type="PTM">
    <text evidence="1">Phosphorylated.</text>
</comment>
<comment type="similarity">
    <text evidence="1">Belongs to the papillomaviridae E1 protein family.</text>
</comment>
<accession>P36722</accession>
<protein>
    <recommendedName>
        <fullName evidence="1">Replication protein E1</fullName>
        <ecNumber evidence="1">5.6.2.4</ecNumber>
    </recommendedName>
    <alternativeName>
        <fullName evidence="1">ATP-dependent helicase E1</fullName>
    </alternativeName>
    <alternativeName>
        <fullName evidence="1">DNA 3'-5' helicase E1</fullName>
    </alternativeName>
</protein>
<evidence type="ECO:0000255" key="1">
    <source>
        <dbReference type="HAMAP-Rule" id="MF_04000"/>
    </source>
</evidence>
<evidence type="ECO:0000256" key="2">
    <source>
        <dbReference type="SAM" id="MobiDB-lite"/>
    </source>
</evidence>
<name>VE1_HPV26</name>